<name>CWP05_PHAVU</name>
<evidence type="ECO:0000269" key="1">
    <source>
    </source>
</evidence>
<evidence type="ECO:0000303" key="2">
    <source>
    </source>
</evidence>
<evidence type="ECO:0000305" key="3"/>
<organism>
    <name type="scientific">Phaseolus vulgaris</name>
    <name type="common">Kidney bean</name>
    <name type="synonym">French bean</name>
    <dbReference type="NCBI Taxonomy" id="3885"/>
    <lineage>
        <taxon>Eukaryota</taxon>
        <taxon>Viridiplantae</taxon>
        <taxon>Streptophyta</taxon>
        <taxon>Embryophyta</taxon>
        <taxon>Tracheophyta</taxon>
        <taxon>Spermatophyta</taxon>
        <taxon>Magnoliopsida</taxon>
        <taxon>eudicotyledons</taxon>
        <taxon>Gunneridae</taxon>
        <taxon>Pentapetalae</taxon>
        <taxon>rosids</taxon>
        <taxon>fabids</taxon>
        <taxon>Fabales</taxon>
        <taxon>Fabaceae</taxon>
        <taxon>Papilionoideae</taxon>
        <taxon>50 kb inversion clade</taxon>
        <taxon>NPAAA clade</taxon>
        <taxon>indigoferoid/millettioid clade</taxon>
        <taxon>Phaseoleae</taxon>
        <taxon>Phaseolus</taxon>
    </lineage>
</organism>
<dbReference type="GO" id="GO:0005576">
    <property type="term" value="C:extracellular region"/>
    <property type="evidence" value="ECO:0007669"/>
    <property type="project" value="UniProtKB-KW"/>
</dbReference>
<proteinExistence type="evidence at protein level"/>
<accession>P80764</accession>
<feature type="chain" id="PRO_0000079636" description="65 kDa cell wall protein">
    <location>
        <begin position="1"/>
        <end position="9" status="greater than"/>
    </location>
</feature>
<feature type="non-terminal residue" evidence="2">
    <location>
        <position position="9"/>
    </location>
</feature>
<comment type="subcellular location">
    <subcellularLocation>
        <location evidence="1">Secreted</location>
        <location evidence="1">Cell wall</location>
    </subcellularLocation>
</comment>
<sequence>EDPVRFNLG</sequence>
<protein>
    <recommendedName>
        <fullName>65 kDa cell wall protein</fullName>
    </recommendedName>
</protein>
<keyword id="KW-0134">Cell wall</keyword>
<keyword id="KW-0903">Direct protein sequencing</keyword>
<keyword id="KW-0964">Secreted</keyword>
<reference evidence="3" key="1">
    <citation type="journal article" date="1997" name="J. Biol. Chem.">
        <title>Differential extraction and protein sequencing reveals major differences in patterns of primary cell wall proteins from plants.</title>
        <authorList>
            <person name="Robertson D."/>
            <person name="Mitchell G.P."/>
            <person name="Gilroy J.S."/>
            <person name="Gerrish C."/>
            <person name="Bolwell G.P."/>
            <person name="Slabas A.R."/>
        </authorList>
    </citation>
    <scope>PROTEIN SEQUENCE</scope>
    <scope>SUBCELLULAR LOCATION</scope>
</reference>